<reference key="1">
    <citation type="journal article" date="2007" name="Archaea">
        <title>The genome of Hyperthermus butylicus: a sulfur-reducing, peptide fermenting, neutrophilic Crenarchaeote growing up to 108 degrees C.</title>
        <authorList>
            <person name="Bruegger K."/>
            <person name="Chen L."/>
            <person name="Stark M."/>
            <person name="Zibat A."/>
            <person name="Redder P."/>
            <person name="Ruepp A."/>
            <person name="Awayez M."/>
            <person name="She Q."/>
            <person name="Garrett R.A."/>
            <person name="Klenk H.-P."/>
        </authorList>
    </citation>
    <scope>NUCLEOTIDE SEQUENCE [LARGE SCALE GENOMIC DNA]</scope>
    <source>
        <strain>DSM 5456 / JCM 9403 / PLM1-5</strain>
    </source>
</reference>
<keyword id="KW-0378">Hydrolase</keyword>
<keyword id="KW-0479">Metal-binding</keyword>
<keyword id="KW-1185">Reference proteome</keyword>
<keyword id="KW-0862">Zinc</keyword>
<comment type="function">
    <text evidence="1">D-aminoacyl-tRNA deacylase with broad substrate specificity. By recycling D-aminoacyl-tRNA to D-amino acids and free tRNA molecules, this enzyme counteracts the toxicity associated with the formation of D-aminoacyl-tRNA entities in vivo.</text>
</comment>
<comment type="catalytic activity">
    <reaction evidence="1">
        <text>a D-aminoacyl-tRNA + H2O = a tRNA + a D-alpha-amino acid + H(+)</text>
        <dbReference type="Rhea" id="RHEA:13953"/>
        <dbReference type="Rhea" id="RHEA-COMP:10123"/>
        <dbReference type="Rhea" id="RHEA-COMP:10124"/>
        <dbReference type="ChEBI" id="CHEBI:15377"/>
        <dbReference type="ChEBI" id="CHEBI:15378"/>
        <dbReference type="ChEBI" id="CHEBI:59871"/>
        <dbReference type="ChEBI" id="CHEBI:78442"/>
        <dbReference type="ChEBI" id="CHEBI:79333"/>
        <dbReference type="EC" id="3.1.1.96"/>
    </reaction>
</comment>
<comment type="catalytic activity">
    <reaction evidence="1">
        <text>glycyl-tRNA(Ala) + H2O = tRNA(Ala) + glycine + H(+)</text>
        <dbReference type="Rhea" id="RHEA:53744"/>
        <dbReference type="Rhea" id="RHEA-COMP:9657"/>
        <dbReference type="Rhea" id="RHEA-COMP:13640"/>
        <dbReference type="ChEBI" id="CHEBI:15377"/>
        <dbReference type="ChEBI" id="CHEBI:15378"/>
        <dbReference type="ChEBI" id="CHEBI:57305"/>
        <dbReference type="ChEBI" id="CHEBI:78442"/>
        <dbReference type="ChEBI" id="CHEBI:78522"/>
        <dbReference type="EC" id="3.1.1.96"/>
    </reaction>
</comment>
<comment type="cofactor">
    <cofactor evidence="1">
        <name>Zn(2+)</name>
        <dbReference type="ChEBI" id="CHEBI:29105"/>
    </cofactor>
    <text evidence="1">Binds 2 Zn(2+) ions per subunit.</text>
</comment>
<comment type="subunit">
    <text evidence="1">Monomer.</text>
</comment>
<comment type="similarity">
    <text evidence="1">Belongs to the DtdA deacylase family.</text>
</comment>
<organism>
    <name type="scientific">Hyperthermus butylicus (strain DSM 5456 / JCM 9403 / PLM1-5)</name>
    <dbReference type="NCBI Taxonomy" id="415426"/>
    <lineage>
        <taxon>Archaea</taxon>
        <taxon>Thermoproteota</taxon>
        <taxon>Thermoprotei</taxon>
        <taxon>Desulfurococcales</taxon>
        <taxon>Pyrodictiaceae</taxon>
        <taxon>Hyperthermus</taxon>
    </lineage>
</organism>
<proteinExistence type="inferred from homology"/>
<gene>
    <name evidence="1" type="primary">dtdA</name>
    <name type="ordered locus">Hbut_0781</name>
</gene>
<feature type="chain" id="PRO_0000345211" description="D-aminoacyl-tRNA deacylase">
    <location>
        <begin position="1"/>
        <end position="272"/>
    </location>
</feature>
<protein>
    <recommendedName>
        <fullName evidence="1">D-aminoacyl-tRNA deacylase</fullName>
        <ecNumber evidence="1">3.1.1.96</ecNumber>
    </recommendedName>
    <alternativeName>
        <fullName>D-tyrosyl-tRNA(Tyr) deacylase</fullName>
    </alternativeName>
</protein>
<accession>A2BKX3</accession>
<sequence>MLALIYSARDPAGSGTARIIRELLGGDRCSLPRAVECTLLSNGVYLVGFDADSIFLDFLGEVLPANIEGYVVLSRHSGGKPSLTVHHTGNPGPEAPYGGKPWSLAPAWPRTAAGLLRTYRRVAEEMGLTGEFQVTLEATHHGPTELEKPIVFIEIGSSEREWVRRDTQNAMAETVIRFMERDLVSVECSKVAIGIGDTHYPIKHTRNVLERGYCYSHIFSKHVLDNLTLELLEQALEKTRDKVDTVVLAKVPSRVKQLARSFAEKYGLQLEK</sequence>
<evidence type="ECO:0000255" key="1">
    <source>
        <dbReference type="HAMAP-Rule" id="MF_00562"/>
    </source>
</evidence>
<name>DTDA_HYPBU</name>
<dbReference type="EC" id="3.1.1.96" evidence="1"/>
<dbReference type="EMBL" id="CP000493">
    <property type="protein sequence ID" value="ABM80634.1"/>
    <property type="molecule type" value="Genomic_DNA"/>
</dbReference>
<dbReference type="RefSeq" id="WP_011821952.1">
    <property type="nucleotide sequence ID" value="NC_008818.1"/>
</dbReference>
<dbReference type="SMR" id="A2BKX3"/>
<dbReference type="STRING" id="415426.Hbut_0781"/>
<dbReference type="EnsemblBacteria" id="ABM80634">
    <property type="protein sequence ID" value="ABM80634"/>
    <property type="gene ID" value="Hbut_0781"/>
</dbReference>
<dbReference type="GeneID" id="4781444"/>
<dbReference type="KEGG" id="hbu:Hbut_0781"/>
<dbReference type="eggNOG" id="arCOG01616">
    <property type="taxonomic scope" value="Archaea"/>
</dbReference>
<dbReference type="HOGENOM" id="CLU_056464_1_0_2"/>
<dbReference type="OrthoDB" id="9863at2157"/>
<dbReference type="Proteomes" id="UP000002593">
    <property type="component" value="Chromosome"/>
</dbReference>
<dbReference type="GO" id="GO:0051499">
    <property type="term" value="F:D-aminoacyl-tRNA deacylase activity"/>
    <property type="evidence" value="ECO:0007669"/>
    <property type="project" value="UniProtKB-UniRule"/>
</dbReference>
<dbReference type="GO" id="GO:0008270">
    <property type="term" value="F:zinc ion binding"/>
    <property type="evidence" value="ECO:0007669"/>
    <property type="project" value="UniProtKB-UniRule"/>
</dbReference>
<dbReference type="GO" id="GO:0019478">
    <property type="term" value="P:D-amino acid catabolic process"/>
    <property type="evidence" value="ECO:0007669"/>
    <property type="project" value="UniProtKB-UniRule"/>
</dbReference>
<dbReference type="Gene3D" id="3.40.50.10700">
    <property type="entry name" value="AF0625-like"/>
    <property type="match status" value="1"/>
</dbReference>
<dbReference type="Gene3D" id="3.40.630.50">
    <property type="entry name" value="AF0625-like"/>
    <property type="match status" value="1"/>
</dbReference>
<dbReference type="HAMAP" id="MF_00562">
    <property type="entry name" value="Deacylase_DtdA"/>
    <property type="match status" value="1"/>
</dbReference>
<dbReference type="InterPro" id="IPR018033">
    <property type="entry name" value="Deacylase_DtdA_archaea"/>
</dbReference>
<dbReference type="InterPro" id="IPR007508">
    <property type="entry name" value="DtdA"/>
</dbReference>
<dbReference type="NCBIfam" id="NF003072">
    <property type="entry name" value="PRK03995.1-4"/>
    <property type="match status" value="1"/>
</dbReference>
<dbReference type="PANTHER" id="PTHR34667">
    <property type="entry name" value="D-AMINOACYL-TRNA DEACYLASE"/>
    <property type="match status" value="1"/>
</dbReference>
<dbReference type="PANTHER" id="PTHR34667:SF1">
    <property type="entry name" value="D-AMINOACYL-TRNA DEACYLASE"/>
    <property type="match status" value="1"/>
</dbReference>
<dbReference type="Pfam" id="PF04414">
    <property type="entry name" value="tRNA_deacylase"/>
    <property type="match status" value="1"/>
</dbReference>
<dbReference type="PIRSF" id="PIRSF016210">
    <property type="entry name" value="UCP016210"/>
    <property type="match status" value="1"/>
</dbReference>
<dbReference type="SUPFAM" id="SSF142535">
    <property type="entry name" value="AF0625-like"/>
    <property type="match status" value="1"/>
</dbReference>